<organism>
    <name type="scientific">Struthio camelus</name>
    <name type="common">Common ostrich</name>
    <dbReference type="NCBI Taxonomy" id="8801"/>
    <lineage>
        <taxon>Eukaryota</taxon>
        <taxon>Metazoa</taxon>
        <taxon>Chordata</taxon>
        <taxon>Craniata</taxon>
        <taxon>Vertebrata</taxon>
        <taxon>Euteleostomi</taxon>
        <taxon>Archelosauria</taxon>
        <taxon>Archosauria</taxon>
        <taxon>Dinosauria</taxon>
        <taxon>Saurischia</taxon>
        <taxon>Theropoda</taxon>
        <taxon>Coelurosauria</taxon>
        <taxon>Aves</taxon>
        <taxon>Palaeognathae</taxon>
        <taxon>Struthioniformes</taxon>
        <taxon>Struthionidae</taxon>
        <taxon>Struthio</taxon>
    </lineage>
</organism>
<evidence type="ECO:0000250" key="1">
    <source>
        <dbReference type="UniProtKB" id="P01356"/>
    </source>
</evidence>
<evidence type="ECO:0000255" key="2"/>
<evidence type="ECO:0000256" key="3">
    <source>
        <dbReference type="SAM" id="MobiDB-lite"/>
    </source>
</evidence>
<evidence type="ECO:0000269" key="4">
    <source>
    </source>
</evidence>
<evidence type="ECO:0000303" key="5">
    <source>
    </source>
</evidence>
<evidence type="ECO:0000305" key="6"/>
<evidence type="ECO:0000305" key="7">
    <source>
    </source>
</evidence>
<evidence type="ECO:0000312" key="8">
    <source>
        <dbReference type="EMBL" id="CAB62255.1"/>
    </source>
</evidence>
<accession>Q9PU29</accession>
<dbReference type="EMBL" id="AJ251274">
    <property type="protein sequence ID" value="CAB62255.1"/>
    <property type="molecule type" value="mRNA"/>
</dbReference>
<dbReference type="GO" id="GO:0030424">
    <property type="term" value="C:axon"/>
    <property type="evidence" value="ECO:0000250"/>
    <property type="project" value="UniProtKB"/>
</dbReference>
<dbReference type="GO" id="GO:0005615">
    <property type="term" value="C:extracellular space"/>
    <property type="evidence" value="ECO:0007669"/>
    <property type="project" value="TreeGrafter"/>
</dbReference>
<dbReference type="GO" id="GO:0005179">
    <property type="term" value="F:hormone activity"/>
    <property type="evidence" value="ECO:0000303"/>
    <property type="project" value="UniProtKB"/>
</dbReference>
<dbReference type="GO" id="GO:0005184">
    <property type="term" value="F:neuropeptide hormone activity"/>
    <property type="evidence" value="ECO:0007669"/>
    <property type="project" value="InterPro"/>
</dbReference>
<dbReference type="GO" id="GO:0007409">
    <property type="term" value="P:axonogenesis"/>
    <property type="evidence" value="ECO:0000250"/>
    <property type="project" value="UniProtKB"/>
</dbReference>
<dbReference type="GO" id="GO:0007586">
    <property type="term" value="P:digestion"/>
    <property type="evidence" value="ECO:0000250"/>
    <property type="project" value="UniProtKB"/>
</dbReference>
<dbReference type="GO" id="GO:0001764">
    <property type="term" value="P:neuron migration"/>
    <property type="evidence" value="ECO:0000250"/>
    <property type="project" value="UniProtKB"/>
</dbReference>
<dbReference type="InterPro" id="IPR015499">
    <property type="entry name" value="CCK-like"/>
</dbReference>
<dbReference type="InterPro" id="IPR001651">
    <property type="entry name" value="Gastrin/CCK"/>
</dbReference>
<dbReference type="InterPro" id="IPR013152">
    <property type="entry name" value="Gastrin/cholecystokinin_CS"/>
</dbReference>
<dbReference type="PANTHER" id="PTHR10786">
    <property type="entry name" value="CHOLECYSTOKININ"/>
    <property type="match status" value="1"/>
</dbReference>
<dbReference type="PANTHER" id="PTHR10786:SF0">
    <property type="entry name" value="CHOLECYSTOKININ"/>
    <property type="match status" value="1"/>
</dbReference>
<dbReference type="Pfam" id="PF00918">
    <property type="entry name" value="Gastrin"/>
    <property type="match status" value="1"/>
</dbReference>
<dbReference type="SMART" id="SM00029">
    <property type="entry name" value="GASTRIN"/>
    <property type="match status" value="1"/>
</dbReference>
<dbReference type="PROSITE" id="PS00259">
    <property type="entry name" value="GASTRIN"/>
    <property type="match status" value="1"/>
</dbReference>
<keyword id="KW-0027">Amidation</keyword>
<keyword id="KW-0165">Cleavage on pair of basic residues</keyword>
<keyword id="KW-0903">Direct protein sequencing</keyword>
<keyword id="KW-0372">Hormone</keyword>
<keyword id="KW-0964">Secreted</keyword>
<keyword id="KW-0732">Signal</keyword>
<keyword id="KW-0765">Sulfation</keyword>
<feature type="signal peptide" evidence="2">
    <location>
        <begin position="1"/>
        <end position="20"/>
    </location>
</feature>
<feature type="chain" id="PRO_0000010580" description="Cholecystokinin" evidence="2">
    <location>
        <begin position="21"/>
        <end position="130"/>
    </location>
</feature>
<feature type="propeptide" id="PRO_0000010581" evidence="5">
    <location>
        <begin position="21"/>
        <end position="48"/>
    </location>
</feature>
<feature type="peptide" id="PRO_0000010582" description="Cholecystokinin-70" evidence="6">
    <location>
        <begin position="49"/>
        <end position="118"/>
    </location>
</feature>
<feature type="peptide" id="PRO_0000010583" description="Cholecystokinin-8">
    <location>
        <begin position="111"/>
        <end position="118"/>
    </location>
</feature>
<feature type="peptide" id="PRO_0000010584" description="Cholecystokinin-7">
    <location>
        <begin position="112"/>
        <end position="118"/>
    </location>
</feature>
<feature type="propeptide" id="PRO_0000010585" evidence="4">
    <location>
        <begin position="122"/>
        <end position="130"/>
    </location>
</feature>
<feature type="region of interest" description="Disordered" evidence="3">
    <location>
        <begin position="40"/>
        <end position="59"/>
    </location>
</feature>
<feature type="modified residue" description="Sulfotyrosine" evidence="5">
    <location>
        <position position="112"/>
    </location>
</feature>
<feature type="modified residue" description="Phenylalanine amide" evidence="7">
    <location>
        <position position="118"/>
    </location>
</feature>
<feature type="modified residue" description="Sulfotyrosine" evidence="1">
    <location>
        <position position="126"/>
    </location>
</feature>
<feature type="modified residue" description="Sulfotyrosine" evidence="1">
    <location>
        <position position="128"/>
    </location>
</feature>
<proteinExistence type="evidence at protein level"/>
<reference evidence="6 8" key="1">
    <citation type="journal article" date="2000" name="Peptides">
        <title>Identification of ostrich and chicken cholecystokinin cDNA and intestinal peptides.</title>
        <authorList>
            <person name="Jonson L."/>
            <person name="Schoeman N."/>
            <person name="Saayman H."/>
            <person name="Naude R."/>
            <person name="Jensen H."/>
            <person name="Johnsen A.H."/>
        </authorList>
    </citation>
    <scope>NUCLEOTIDE SEQUENCE [MRNA]</scope>
    <scope>PROTEIN SEQUENCE OF 111-118</scope>
    <scope>TISSUE SPECIFICITY</scope>
    <scope>SULFATION AT TYR-112</scope>
    <scope>AMIDATION AT PHE-118</scope>
    <scope>MASS SPECTROMETRY</scope>
    <source>
        <tissue evidence="4">Brain</tissue>
    </source>
</reference>
<name>CCKN_STRCA</name>
<sequence length="130" mass="14273">MYSGICICVFLAVLSASSFGQQTAGSHNGNPLAAELEQSLTEHHRHVRAPSSAGPLKPVPRLDGSIDQRANIGALLAKYLQQARKGPTGRISVMGNRVQSIDPTHRINDRDYMGWMDFGRRSAEEYEYSS</sequence>
<comment type="function">
    <text evidence="1">This peptide hormone induces gall bladder contraction and the release of pancreatic enzymes in the gut. Its function in the brain is not clear (By similarity).</text>
</comment>
<comment type="subcellular location">
    <subcellularLocation>
        <location>Secreted</location>
    </subcellularLocation>
</comment>
<comment type="tissue specificity">
    <text evidence="4">Highly concentrated in the duodenum. Also localized in more distal parts of the small intestine.</text>
</comment>
<comment type="PTM">
    <text>The precursor is cleaved by proteases to produce a number of active cholecystokinins.</text>
</comment>
<comment type="mass spectrometry" mass="980.3" method="MALDI" evidence="4">
    <molecule>Cholecystokinin-7</molecule>
</comment>
<comment type="mass spectrometry" mass="1059.9" method="MALDI" evidence="4">
    <molecule>Cholecystokinin-7</molecule>
    <text>Tyrosyl sulfated.</text>
</comment>
<comment type="mass spectrometry" mass="1095.4" method="MALDI" evidence="4">
    <molecule>Cholecystokinin-8</molecule>
</comment>
<comment type="mass spectrometry" mass="1175.2" method="MALDI" evidence="4">
    <molecule>Cholecystokinin-8</molecule>
    <text>Tyrosyl sulfated.</text>
</comment>
<comment type="similarity">
    <text evidence="1">Belongs to the gastrin/cholecystokinin family.</text>
</comment>
<gene>
    <name type="primary">CCK</name>
</gene>
<protein>
    <recommendedName>
        <fullName>Cholecystokinin</fullName>
        <shortName>CCK</shortName>
    </recommendedName>
    <component>
        <recommendedName>
            <fullName>Cholecystokinin-70</fullName>
            <shortName>CCK70</shortName>
        </recommendedName>
    </component>
    <component>
        <recommendedName>
            <fullName>Cholecystokinin-8</fullName>
            <shortName>CCK8</shortName>
        </recommendedName>
    </component>
    <component>
        <recommendedName>
            <fullName>Cholecystokinin-7</fullName>
            <shortName>CCK7</shortName>
        </recommendedName>
    </component>
</protein>